<comment type="function">
    <text evidence="1">Specifically methylates position 2 of adenine 2503 in 23S rRNA and position 2 of adenine 37 in tRNAs. m2A2503 modification seems to play a crucial role in the proofreading step occurring at the peptidyl transferase center and thus would serve to optimize ribosomal fidelity.</text>
</comment>
<comment type="catalytic activity">
    <reaction evidence="1">
        <text>adenosine(2503) in 23S rRNA + 2 reduced [2Fe-2S]-[ferredoxin] + 2 S-adenosyl-L-methionine = 2-methyladenosine(2503) in 23S rRNA + 5'-deoxyadenosine + L-methionine + 2 oxidized [2Fe-2S]-[ferredoxin] + S-adenosyl-L-homocysteine</text>
        <dbReference type="Rhea" id="RHEA:42916"/>
        <dbReference type="Rhea" id="RHEA-COMP:10000"/>
        <dbReference type="Rhea" id="RHEA-COMP:10001"/>
        <dbReference type="Rhea" id="RHEA-COMP:10152"/>
        <dbReference type="Rhea" id="RHEA-COMP:10282"/>
        <dbReference type="ChEBI" id="CHEBI:17319"/>
        <dbReference type="ChEBI" id="CHEBI:33737"/>
        <dbReference type="ChEBI" id="CHEBI:33738"/>
        <dbReference type="ChEBI" id="CHEBI:57844"/>
        <dbReference type="ChEBI" id="CHEBI:57856"/>
        <dbReference type="ChEBI" id="CHEBI:59789"/>
        <dbReference type="ChEBI" id="CHEBI:74411"/>
        <dbReference type="ChEBI" id="CHEBI:74497"/>
        <dbReference type="EC" id="2.1.1.192"/>
    </reaction>
</comment>
<comment type="catalytic activity">
    <reaction evidence="1">
        <text>adenosine(37) in tRNA + 2 reduced [2Fe-2S]-[ferredoxin] + 2 S-adenosyl-L-methionine = 2-methyladenosine(37) in tRNA + 5'-deoxyadenosine + L-methionine + 2 oxidized [2Fe-2S]-[ferredoxin] + S-adenosyl-L-homocysteine</text>
        <dbReference type="Rhea" id="RHEA:43332"/>
        <dbReference type="Rhea" id="RHEA-COMP:10000"/>
        <dbReference type="Rhea" id="RHEA-COMP:10001"/>
        <dbReference type="Rhea" id="RHEA-COMP:10162"/>
        <dbReference type="Rhea" id="RHEA-COMP:10485"/>
        <dbReference type="ChEBI" id="CHEBI:17319"/>
        <dbReference type="ChEBI" id="CHEBI:33737"/>
        <dbReference type="ChEBI" id="CHEBI:33738"/>
        <dbReference type="ChEBI" id="CHEBI:57844"/>
        <dbReference type="ChEBI" id="CHEBI:57856"/>
        <dbReference type="ChEBI" id="CHEBI:59789"/>
        <dbReference type="ChEBI" id="CHEBI:74411"/>
        <dbReference type="ChEBI" id="CHEBI:74497"/>
        <dbReference type="EC" id="2.1.1.192"/>
    </reaction>
</comment>
<comment type="cofactor">
    <cofactor evidence="1">
        <name>[4Fe-4S] cluster</name>
        <dbReference type="ChEBI" id="CHEBI:49883"/>
    </cofactor>
    <text evidence="1">Binds 1 [4Fe-4S] cluster. The cluster is coordinated with 3 cysteines and an exchangeable S-adenosyl-L-methionine.</text>
</comment>
<comment type="subcellular location">
    <subcellularLocation>
        <location evidence="1">Cytoplasm</location>
    </subcellularLocation>
</comment>
<comment type="miscellaneous">
    <text evidence="1">Reaction proceeds by a ping-pong mechanism involving intermediate methylation of a conserved cysteine residue.</text>
</comment>
<comment type="similarity">
    <text evidence="1">Belongs to the radical SAM superfamily. RlmN family.</text>
</comment>
<feature type="chain" id="PRO_1000188580" description="Dual-specificity RNA methyltransferase RlmN">
    <location>
        <begin position="1"/>
        <end position="357"/>
    </location>
</feature>
<feature type="domain" description="Radical SAM core" evidence="2">
    <location>
        <begin position="109"/>
        <end position="340"/>
    </location>
</feature>
<feature type="active site" description="Proton acceptor" evidence="1">
    <location>
        <position position="89"/>
    </location>
</feature>
<feature type="active site" description="S-methylcysteine intermediate" evidence="1">
    <location>
        <position position="345"/>
    </location>
</feature>
<feature type="binding site" evidence="1">
    <location>
        <position position="123"/>
    </location>
    <ligand>
        <name>[4Fe-4S] cluster</name>
        <dbReference type="ChEBI" id="CHEBI:49883"/>
        <note>4Fe-4S-S-AdoMet</note>
    </ligand>
</feature>
<feature type="binding site" evidence="1">
    <location>
        <position position="127"/>
    </location>
    <ligand>
        <name>[4Fe-4S] cluster</name>
        <dbReference type="ChEBI" id="CHEBI:49883"/>
        <note>4Fe-4S-S-AdoMet</note>
    </ligand>
</feature>
<feature type="binding site" evidence="1">
    <location>
        <position position="130"/>
    </location>
    <ligand>
        <name>[4Fe-4S] cluster</name>
        <dbReference type="ChEBI" id="CHEBI:49883"/>
        <note>4Fe-4S-S-AdoMet</note>
    </ligand>
</feature>
<feature type="binding site" evidence="1">
    <location>
        <begin position="173"/>
        <end position="174"/>
    </location>
    <ligand>
        <name>S-adenosyl-L-methionine</name>
        <dbReference type="ChEBI" id="CHEBI:59789"/>
    </ligand>
</feature>
<feature type="binding site" evidence="1">
    <location>
        <position position="203"/>
    </location>
    <ligand>
        <name>S-adenosyl-L-methionine</name>
        <dbReference type="ChEBI" id="CHEBI:59789"/>
    </ligand>
</feature>
<feature type="binding site" evidence="1">
    <location>
        <begin position="226"/>
        <end position="228"/>
    </location>
    <ligand>
        <name>S-adenosyl-L-methionine</name>
        <dbReference type="ChEBI" id="CHEBI:59789"/>
    </ligand>
</feature>
<feature type="binding site" evidence="1">
    <location>
        <position position="302"/>
    </location>
    <ligand>
        <name>S-adenosyl-L-methionine</name>
        <dbReference type="ChEBI" id="CHEBI:59789"/>
    </ligand>
</feature>
<feature type="disulfide bond" description="(transient)" evidence="1">
    <location>
        <begin position="116"/>
        <end position="345"/>
    </location>
</feature>
<protein>
    <recommendedName>
        <fullName evidence="1">Dual-specificity RNA methyltransferase RlmN</fullName>
        <ecNumber evidence="1">2.1.1.192</ecNumber>
    </recommendedName>
    <alternativeName>
        <fullName evidence="1">23S rRNA (adenine(2503)-C(2))-methyltransferase</fullName>
    </alternativeName>
    <alternativeName>
        <fullName evidence="1">23S rRNA m2A2503 methyltransferase</fullName>
    </alternativeName>
    <alternativeName>
        <fullName evidence="1">Ribosomal RNA large subunit methyltransferase N</fullName>
    </alternativeName>
    <alternativeName>
        <fullName evidence="1">tRNA (adenine(37)-C(2))-methyltransferase</fullName>
    </alternativeName>
    <alternativeName>
        <fullName evidence="1">tRNA m2A37 methyltransferase</fullName>
    </alternativeName>
</protein>
<proteinExistence type="inferred from homology"/>
<name>RLMN_HELPG</name>
<gene>
    <name evidence="1" type="primary">rlmN</name>
    <name type="ordered locus">HPG27_1349</name>
</gene>
<sequence length="357" mass="40759">MKASVYDFTLKELSQLLKPSFRAKQLYLWLYAKYKTSFKDMQNNFSKDFIAYLEREFTLRTIEIAHVRKSIDGSKKYLFKSLRDNHTFEAVLLKMKDKKIDEETNAILEGEKYTVCVSCQIGCQVGCTFCFTQKGGFVRNLKASEIIQQALLIKEDNNLPIEKALNIVFMGMGEPLNNLDEVCKAIEIFNTGMQISPKRITISTSGVADKIPILAGKNLGVQLAISLHAVDDKTRSSLMPLNKKYNIECVLNEVRKWPLEQRKRVMFEYLLIKDLNDSLDCAKKLLKLLNGIKSKVNLILFNPHEGSKFERPSLESARMFADFLNSKGLLCTIRESKALDIEAACGQLREKKLSQQI</sequence>
<keyword id="KW-0004">4Fe-4S</keyword>
<keyword id="KW-0963">Cytoplasm</keyword>
<keyword id="KW-1015">Disulfide bond</keyword>
<keyword id="KW-0408">Iron</keyword>
<keyword id="KW-0411">Iron-sulfur</keyword>
<keyword id="KW-0479">Metal-binding</keyword>
<keyword id="KW-0489">Methyltransferase</keyword>
<keyword id="KW-1185">Reference proteome</keyword>
<keyword id="KW-0698">rRNA processing</keyword>
<keyword id="KW-0949">S-adenosyl-L-methionine</keyword>
<keyword id="KW-0808">Transferase</keyword>
<keyword id="KW-0819">tRNA processing</keyword>
<dbReference type="EC" id="2.1.1.192" evidence="1"/>
<dbReference type="EMBL" id="CP001173">
    <property type="protein sequence ID" value="ACI28096.1"/>
    <property type="molecule type" value="Genomic_DNA"/>
</dbReference>
<dbReference type="RefSeq" id="WP_000648193.1">
    <property type="nucleotide sequence ID" value="NC_011333.1"/>
</dbReference>
<dbReference type="SMR" id="B5Z947"/>
<dbReference type="KEGG" id="hpg:HPG27_1349"/>
<dbReference type="HOGENOM" id="CLU_029101_2_0_7"/>
<dbReference type="Proteomes" id="UP000001735">
    <property type="component" value="Chromosome"/>
</dbReference>
<dbReference type="GO" id="GO:0005737">
    <property type="term" value="C:cytoplasm"/>
    <property type="evidence" value="ECO:0007669"/>
    <property type="project" value="UniProtKB-SubCell"/>
</dbReference>
<dbReference type="GO" id="GO:0051539">
    <property type="term" value="F:4 iron, 4 sulfur cluster binding"/>
    <property type="evidence" value="ECO:0007669"/>
    <property type="project" value="UniProtKB-UniRule"/>
</dbReference>
<dbReference type="GO" id="GO:0046872">
    <property type="term" value="F:metal ion binding"/>
    <property type="evidence" value="ECO:0007669"/>
    <property type="project" value="UniProtKB-KW"/>
</dbReference>
<dbReference type="GO" id="GO:0070040">
    <property type="term" value="F:rRNA (adenine(2503)-C2-)-methyltransferase activity"/>
    <property type="evidence" value="ECO:0007669"/>
    <property type="project" value="UniProtKB-UniRule"/>
</dbReference>
<dbReference type="GO" id="GO:0019843">
    <property type="term" value="F:rRNA binding"/>
    <property type="evidence" value="ECO:0007669"/>
    <property type="project" value="UniProtKB-UniRule"/>
</dbReference>
<dbReference type="GO" id="GO:0002935">
    <property type="term" value="F:tRNA (adenine(37)-C2)-methyltransferase activity"/>
    <property type="evidence" value="ECO:0007669"/>
    <property type="project" value="UniProtKB-UniRule"/>
</dbReference>
<dbReference type="GO" id="GO:0000049">
    <property type="term" value="F:tRNA binding"/>
    <property type="evidence" value="ECO:0007669"/>
    <property type="project" value="UniProtKB-UniRule"/>
</dbReference>
<dbReference type="GO" id="GO:0070475">
    <property type="term" value="P:rRNA base methylation"/>
    <property type="evidence" value="ECO:0007669"/>
    <property type="project" value="UniProtKB-UniRule"/>
</dbReference>
<dbReference type="GO" id="GO:0030488">
    <property type="term" value="P:tRNA methylation"/>
    <property type="evidence" value="ECO:0007669"/>
    <property type="project" value="UniProtKB-UniRule"/>
</dbReference>
<dbReference type="CDD" id="cd01335">
    <property type="entry name" value="Radical_SAM"/>
    <property type="match status" value="1"/>
</dbReference>
<dbReference type="FunFam" id="3.20.20.70:FF:000014">
    <property type="entry name" value="Probable dual-specificity RNA methyltransferase RlmN"/>
    <property type="match status" value="1"/>
</dbReference>
<dbReference type="Gene3D" id="1.10.150.530">
    <property type="match status" value="1"/>
</dbReference>
<dbReference type="Gene3D" id="3.20.20.70">
    <property type="entry name" value="Aldolase class I"/>
    <property type="match status" value="1"/>
</dbReference>
<dbReference type="HAMAP" id="MF_01849">
    <property type="entry name" value="RNA_methyltr_RlmN"/>
    <property type="match status" value="1"/>
</dbReference>
<dbReference type="InterPro" id="IPR013785">
    <property type="entry name" value="Aldolase_TIM"/>
</dbReference>
<dbReference type="InterPro" id="IPR040072">
    <property type="entry name" value="Methyltransferase_A"/>
</dbReference>
<dbReference type="InterPro" id="IPR048641">
    <property type="entry name" value="RlmN_N"/>
</dbReference>
<dbReference type="InterPro" id="IPR027492">
    <property type="entry name" value="RNA_MTrfase_RlmN"/>
</dbReference>
<dbReference type="InterPro" id="IPR004383">
    <property type="entry name" value="rRNA_lsu_MTrfase_RlmN/Cfr"/>
</dbReference>
<dbReference type="InterPro" id="IPR007197">
    <property type="entry name" value="rSAM"/>
</dbReference>
<dbReference type="NCBIfam" id="TIGR00048">
    <property type="entry name" value="rRNA_mod_RlmN"/>
    <property type="match status" value="1"/>
</dbReference>
<dbReference type="PANTHER" id="PTHR30544">
    <property type="entry name" value="23S RRNA METHYLTRANSFERASE"/>
    <property type="match status" value="1"/>
</dbReference>
<dbReference type="PANTHER" id="PTHR30544:SF5">
    <property type="entry name" value="RADICAL SAM CORE DOMAIN-CONTAINING PROTEIN"/>
    <property type="match status" value="1"/>
</dbReference>
<dbReference type="Pfam" id="PF04055">
    <property type="entry name" value="Radical_SAM"/>
    <property type="match status" value="1"/>
</dbReference>
<dbReference type="Pfam" id="PF21016">
    <property type="entry name" value="RlmN_N"/>
    <property type="match status" value="1"/>
</dbReference>
<dbReference type="PIRSF" id="PIRSF006004">
    <property type="entry name" value="CHP00048"/>
    <property type="match status" value="1"/>
</dbReference>
<dbReference type="SFLD" id="SFLDF00275">
    <property type="entry name" value="adenosine_C2_methyltransferase"/>
    <property type="match status" value="1"/>
</dbReference>
<dbReference type="SFLD" id="SFLDG01062">
    <property type="entry name" value="methyltransferase_(Class_A)"/>
    <property type="match status" value="1"/>
</dbReference>
<dbReference type="SUPFAM" id="SSF102114">
    <property type="entry name" value="Radical SAM enzymes"/>
    <property type="match status" value="1"/>
</dbReference>
<dbReference type="PROSITE" id="PS51918">
    <property type="entry name" value="RADICAL_SAM"/>
    <property type="match status" value="1"/>
</dbReference>
<organism>
    <name type="scientific">Helicobacter pylori (strain G27)</name>
    <dbReference type="NCBI Taxonomy" id="563041"/>
    <lineage>
        <taxon>Bacteria</taxon>
        <taxon>Pseudomonadati</taxon>
        <taxon>Campylobacterota</taxon>
        <taxon>Epsilonproteobacteria</taxon>
        <taxon>Campylobacterales</taxon>
        <taxon>Helicobacteraceae</taxon>
        <taxon>Helicobacter</taxon>
    </lineage>
</organism>
<evidence type="ECO:0000255" key="1">
    <source>
        <dbReference type="HAMAP-Rule" id="MF_01849"/>
    </source>
</evidence>
<evidence type="ECO:0000255" key="2">
    <source>
        <dbReference type="PROSITE-ProRule" id="PRU01266"/>
    </source>
</evidence>
<reference key="1">
    <citation type="journal article" date="2009" name="J. Bacteriol.">
        <title>The complete genome sequence of Helicobacter pylori strain G27.</title>
        <authorList>
            <person name="Baltrus D.A."/>
            <person name="Amieva M.R."/>
            <person name="Covacci A."/>
            <person name="Lowe T.M."/>
            <person name="Merrell D.S."/>
            <person name="Ottemann K.M."/>
            <person name="Stein M."/>
            <person name="Salama N.R."/>
            <person name="Guillemin K."/>
        </authorList>
    </citation>
    <scope>NUCLEOTIDE SEQUENCE [LARGE SCALE GENOMIC DNA]</scope>
    <source>
        <strain>G27</strain>
    </source>
</reference>
<accession>B5Z947</accession>